<sequence>MRILITNDDGINADGLAALERIAAQLSDDVWVCAPEYEQSGASRALTLAEPIRVRRLDDRKFSTTGTPTDCVMLAVHELVKGRRPDLLLSGVNRGANLAEDVSMSGTVAGAIEGMALGVPSIALSQMGFYEPGESFEPAEAFAPGIIKRLVELGWPADVVLNVNFPNRPVEEITEVEVTRQGFRDVHVRHAERRTDLRGKEYYWIGFRQERSSPPDGTDLRALYEGKISVTPLHIDLTHQPAVFDLKGKLGGAPPKV</sequence>
<feature type="chain" id="PRO_1000092023" description="5'-nucleotidase SurE">
    <location>
        <begin position="1"/>
        <end position="257"/>
    </location>
</feature>
<feature type="binding site" evidence="1">
    <location>
        <position position="8"/>
    </location>
    <ligand>
        <name>a divalent metal cation</name>
        <dbReference type="ChEBI" id="CHEBI:60240"/>
    </ligand>
</feature>
<feature type="binding site" evidence="1">
    <location>
        <position position="9"/>
    </location>
    <ligand>
        <name>a divalent metal cation</name>
        <dbReference type="ChEBI" id="CHEBI:60240"/>
    </ligand>
</feature>
<feature type="binding site" evidence="1">
    <location>
        <position position="40"/>
    </location>
    <ligand>
        <name>a divalent metal cation</name>
        <dbReference type="ChEBI" id="CHEBI:60240"/>
    </ligand>
</feature>
<feature type="binding site" evidence="1">
    <location>
        <position position="93"/>
    </location>
    <ligand>
        <name>a divalent metal cation</name>
        <dbReference type="ChEBI" id="CHEBI:60240"/>
    </ligand>
</feature>
<accession>B4RDI0</accession>
<protein>
    <recommendedName>
        <fullName evidence="1">5'-nucleotidase SurE</fullName>
        <ecNumber evidence="1">3.1.3.5</ecNumber>
    </recommendedName>
    <alternativeName>
        <fullName evidence="1">Nucleoside 5'-monophosphate phosphohydrolase</fullName>
    </alternativeName>
</protein>
<name>SURE_PHEZH</name>
<keyword id="KW-0963">Cytoplasm</keyword>
<keyword id="KW-0378">Hydrolase</keyword>
<keyword id="KW-0479">Metal-binding</keyword>
<keyword id="KW-0547">Nucleotide-binding</keyword>
<keyword id="KW-1185">Reference proteome</keyword>
<proteinExistence type="inferred from homology"/>
<comment type="function">
    <text evidence="1">Nucleotidase that shows phosphatase activity on nucleoside 5'-monophosphates.</text>
</comment>
<comment type="catalytic activity">
    <reaction evidence="1">
        <text>a ribonucleoside 5'-phosphate + H2O = a ribonucleoside + phosphate</text>
        <dbReference type="Rhea" id="RHEA:12484"/>
        <dbReference type="ChEBI" id="CHEBI:15377"/>
        <dbReference type="ChEBI" id="CHEBI:18254"/>
        <dbReference type="ChEBI" id="CHEBI:43474"/>
        <dbReference type="ChEBI" id="CHEBI:58043"/>
        <dbReference type="EC" id="3.1.3.5"/>
    </reaction>
</comment>
<comment type="cofactor">
    <cofactor evidence="1">
        <name>a divalent metal cation</name>
        <dbReference type="ChEBI" id="CHEBI:60240"/>
    </cofactor>
    <text evidence="1">Binds 1 divalent metal cation per subunit.</text>
</comment>
<comment type="subcellular location">
    <subcellularLocation>
        <location evidence="1">Cytoplasm</location>
    </subcellularLocation>
</comment>
<comment type="similarity">
    <text evidence="1">Belongs to the SurE nucleotidase family.</text>
</comment>
<organism>
    <name type="scientific">Phenylobacterium zucineum (strain HLK1)</name>
    <dbReference type="NCBI Taxonomy" id="450851"/>
    <lineage>
        <taxon>Bacteria</taxon>
        <taxon>Pseudomonadati</taxon>
        <taxon>Pseudomonadota</taxon>
        <taxon>Alphaproteobacteria</taxon>
        <taxon>Caulobacterales</taxon>
        <taxon>Caulobacteraceae</taxon>
        <taxon>Phenylobacterium</taxon>
    </lineage>
</organism>
<gene>
    <name evidence="1" type="primary">surE</name>
    <name type="ordered locus">PHZ_c1959</name>
</gene>
<dbReference type="EC" id="3.1.3.5" evidence="1"/>
<dbReference type="EMBL" id="CP000747">
    <property type="protein sequence ID" value="ACG78370.1"/>
    <property type="molecule type" value="Genomic_DNA"/>
</dbReference>
<dbReference type="RefSeq" id="WP_012522512.1">
    <property type="nucleotide sequence ID" value="NC_011144.1"/>
</dbReference>
<dbReference type="SMR" id="B4RDI0"/>
<dbReference type="STRING" id="450851.PHZ_c1959"/>
<dbReference type="KEGG" id="pzu:PHZ_c1959"/>
<dbReference type="eggNOG" id="COG0496">
    <property type="taxonomic scope" value="Bacteria"/>
</dbReference>
<dbReference type="HOGENOM" id="CLU_045192_1_2_5"/>
<dbReference type="OrthoDB" id="9780815at2"/>
<dbReference type="Proteomes" id="UP000001868">
    <property type="component" value="Chromosome"/>
</dbReference>
<dbReference type="GO" id="GO:0005737">
    <property type="term" value="C:cytoplasm"/>
    <property type="evidence" value="ECO:0007669"/>
    <property type="project" value="UniProtKB-SubCell"/>
</dbReference>
<dbReference type="GO" id="GO:0008254">
    <property type="term" value="F:3'-nucleotidase activity"/>
    <property type="evidence" value="ECO:0007669"/>
    <property type="project" value="TreeGrafter"/>
</dbReference>
<dbReference type="GO" id="GO:0008253">
    <property type="term" value="F:5'-nucleotidase activity"/>
    <property type="evidence" value="ECO:0007669"/>
    <property type="project" value="UniProtKB-UniRule"/>
</dbReference>
<dbReference type="GO" id="GO:0004309">
    <property type="term" value="F:exopolyphosphatase activity"/>
    <property type="evidence" value="ECO:0007669"/>
    <property type="project" value="TreeGrafter"/>
</dbReference>
<dbReference type="GO" id="GO:0046872">
    <property type="term" value="F:metal ion binding"/>
    <property type="evidence" value="ECO:0007669"/>
    <property type="project" value="UniProtKB-UniRule"/>
</dbReference>
<dbReference type="GO" id="GO:0000166">
    <property type="term" value="F:nucleotide binding"/>
    <property type="evidence" value="ECO:0007669"/>
    <property type="project" value="UniProtKB-KW"/>
</dbReference>
<dbReference type="FunFam" id="3.40.1210.10:FF:000001">
    <property type="entry name" value="5'/3'-nucleotidase SurE"/>
    <property type="match status" value="1"/>
</dbReference>
<dbReference type="Gene3D" id="3.40.1210.10">
    <property type="entry name" value="Survival protein SurE-like phosphatase/nucleotidase"/>
    <property type="match status" value="1"/>
</dbReference>
<dbReference type="HAMAP" id="MF_00060">
    <property type="entry name" value="SurE"/>
    <property type="match status" value="1"/>
</dbReference>
<dbReference type="InterPro" id="IPR030048">
    <property type="entry name" value="SurE"/>
</dbReference>
<dbReference type="InterPro" id="IPR002828">
    <property type="entry name" value="SurE-like_Pase/nucleotidase"/>
</dbReference>
<dbReference type="InterPro" id="IPR036523">
    <property type="entry name" value="SurE-like_sf"/>
</dbReference>
<dbReference type="NCBIfam" id="NF001490">
    <property type="entry name" value="PRK00346.1-4"/>
    <property type="match status" value="1"/>
</dbReference>
<dbReference type="NCBIfam" id="TIGR00087">
    <property type="entry name" value="surE"/>
    <property type="match status" value="1"/>
</dbReference>
<dbReference type="PANTHER" id="PTHR30457">
    <property type="entry name" value="5'-NUCLEOTIDASE SURE"/>
    <property type="match status" value="1"/>
</dbReference>
<dbReference type="PANTHER" id="PTHR30457:SF12">
    <property type="entry name" value="5'_3'-NUCLEOTIDASE SURE"/>
    <property type="match status" value="1"/>
</dbReference>
<dbReference type="Pfam" id="PF01975">
    <property type="entry name" value="SurE"/>
    <property type="match status" value="1"/>
</dbReference>
<dbReference type="SUPFAM" id="SSF64167">
    <property type="entry name" value="SurE-like"/>
    <property type="match status" value="1"/>
</dbReference>
<reference key="1">
    <citation type="journal article" date="2008" name="BMC Genomics">
        <title>Complete genome of Phenylobacterium zucineum - a novel facultative intracellular bacterium isolated from human erythroleukemia cell line K562.</title>
        <authorList>
            <person name="Luo Y."/>
            <person name="Xu X."/>
            <person name="Ding Z."/>
            <person name="Liu Z."/>
            <person name="Zhang B."/>
            <person name="Yan Z."/>
            <person name="Sun J."/>
            <person name="Hu S."/>
            <person name="Hu X."/>
        </authorList>
    </citation>
    <scope>NUCLEOTIDE SEQUENCE [LARGE SCALE GENOMIC DNA]</scope>
    <source>
        <strain>HLK1</strain>
    </source>
</reference>
<evidence type="ECO:0000255" key="1">
    <source>
        <dbReference type="HAMAP-Rule" id="MF_00060"/>
    </source>
</evidence>